<proteinExistence type="evidence at protein level"/>
<protein>
    <recommendedName>
        <fullName evidence="18">Putative mitochondrial transporter UCP3</fullName>
    </recommendedName>
    <alternativeName>
        <fullName>Solute carrier family 25 member 9</fullName>
    </alternativeName>
    <alternativeName>
        <fullName evidence="16">Uncoupling protein-3</fullName>
        <shortName>UCP 3</shortName>
    </alternativeName>
</protein>
<name>UCP3_HUMAN</name>
<feature type="chain" id="PRO_0000090672" description="Putative mitochondrial transporter UCP3">
    <location>
        <begin position="1"/>
        <end position="312"/>
    </location>
</feature>
<feature type="topological domain" description="Mitochondrial intermembrane" evidence="2">
    <location>
        <begin position="1"/>
        <end position="10"/>
    </location>
</feature>
<feature type="transmembrane region" description="Helical; Name=1" evidence="3">
    <location>
        <begin position="11"/>
        <end position="32"/>
    </location>
</feature>
<feature type="topological domain" description="Mitochondrial matrix" evidence="2">
    <location>
        <begin position="33"/>
        <end position="76"/>
    </location>
</feature>
<feature type="transmembrane region" description="Helical; Name=2" evidence="3">
    <location>
        <begin position="77"/>
        <end position="99"/>
    </location>
</feature>
<feature type="topological domain" description="Mitochondrial intermembrane" evidence="2">
    <location>
        <begin position="100"/>
        <end position="119"/>
    </location>
</feature>
<feature type="transmembrane region" description="Helical; Name=3" evidence="3">
    <location>
        <begin position="120"/>
        <end position="136"/>
    </location>
</feature>
<feature type="topological domain" description="Mitochondrial matrix" evidence="2">
    <location>
        <begin position="137"/>
        <end position="183"/>
    </location>
</feature>
<feature type="transmembrane region" description="Helical; Name=4" evidence="3">
    <location>
        <begin position="184"/>
        <end position="200"/>
    </location>
</feature>
<feature type="topological domain" description="Mitochondrial intermembrane" evidence="2">
    <location>
        <begin position="201"/>
        <end position="217"/>
    </location>
</feature>
<feature type="transmembrane region" description="Helical; Name=5" evidence="3">
    <location>
        <begin position="218"/>
        <end position="237"/>
    </location>
</feature>
<feature type="topological domain" description="Mitochondrial matrix" evidence="2">
    <location>
        <begin position="238"/>
        <end position="271"/>
    </location>
</feature>
<feature type="transmembrane region" description="Helical; Name=6" evidence="3">
    <location>
        <begin position="272"/>
        <end position="294"/>
    </location>
</feature>
<feature type="topological domain" description="Mitochondrial intermembrane" evidence="2">
    <location>
        <begin position="295"/>
        <end position="312"/>
    </location>
</feature>
<feature type="repeat" description="Solcar 1">
    <location>
        <begin position="11"/>
        <end position="105"/>
    </location>
</feature>
<feature type="repeat" description="Solcar 2">
    <location>
        <begin position="114"/>
        <end position="206"/>
    </location>
</feature>
<feature type="repeat" description="Solcar 3">
    <location>
        <begin position="215"/>
        <end position="300"/>
    </location>
</feature>
<feature type="region of interest" description="Purine nucleotide binding" evidence="1">
    <location>
        <begin position="279"/>
        <end position="301"/>
    </location>
</feature>
<feature type="splice variant" id="VSP_003270" description="In isoform 3." evidence="15">
    <location>
        <begin position="114"/>
        <end position="216"/>
    </location>
</feature>
<feature type="splice variant" id="VSP_003271" description="In isoform UCP3S." evidence="18">
    <location>
        <begin position="276"/>
        <end position="312"/>
    </location>
</feature>
<feature type="sequence variant" id="VAR_050136" description="In dbSNP:rs8179180.">
    <original>V</original>
    <variation>M</variation>
    <location>
        <position position="9"/>
    </location>
</feature>
<feature type="sequence variant" id="VAR_004407" description="In severe obesity with type 2 diabetes; dbSNP:rs17848368." evidence="14">
    <original>R</original>
    <variation>W</variation>
    <location>
        <position position="70"/>
    </location>
</feature>
<feature type="sequence variant" id="VAR_004408" description="In obesity; dbSNP:rs2229707." evidence="13">
    <original>V</original>
    <variation>I</variation>
    <location>
        <position position="102"/>
    </location>
</feature>
<feature type="sequence conflict" description="In Ref. 5; AAC18822." evidence="18" ref="5">
    <original>NC</original>
    <variation>KS</variation>
    <location>
        <begin position="193"/>
        <end position="194"/>
    </location>
</feature>
<dbReference type="EMBL" id="U84763">
    <property type="protein sequence ID" value="AAC51367.1"/>
    <property type="molecule type" value="mRNA"/>
</dbReference>
<dbReference type="EMBL" id="U82818">
    <property type="protein sequence ID" value="AAC51356.1"/>
    <property type="molecule type" value="mRNA"/>
</dbReference>
<dbReference type="EMBL" id="AF001787">
    <property type="protein sequence ID" value="AAC51369.1"/>
    <property type="molecule type" value="mRNA"/>
</dbReference>
<dbReference type="EMBL" id="AF011449">
    <property type="protein sequence ID" value="AAC51767.1"/>
    <property type="molecule type" value="mRNA"/>
</dbReference>
<dbReference type="EMBL" id="AF012202">
    <property type="protein sequence ID" value="AAC51785.1"/>
    <property type="status" value="ALT_INIT"/>
    <property type="molecule type" value="Genomic_DNA"/>
</dbReference>
<dbReference type="EMBL" id="AF012197">
    <property type="protein sequence ID" value="AAC51785.1"/>
    <property type="status" value="JOINED"/>
    <property type="molecule type" value="Genomic_DNA"/>
</dbReference>
<dbReference type="EMBL" id="AF012198">
    <property type="protein sequence ID" value="AAC51785.1"/>
    <property type="status" value="JOINED"/>
    <property type="molecule type" value="Genomic_DNA"/>
</dbReference>
<dbReference type="EMBL" id="AF012199">
    <property type="protein sequence ID" value="AAC51785.1"/>
    <property type="status" value="JOINED"/>
    <property type="molecule type" value="Genomic_DNA"/>
</dbReference>
<dbReference type="EMBL" id="AF012200">
    <property type="protein sequence ID" value="AAC51785.1"/>
    <property type="status" value="JOINED"/>
    <property type="molecule type" value="Genomic_DNA"/>
</dbReference>
<dbReference type="EMBL" id="AF012201">
    <property type="protein sequence ID" value="AAC51785.1"/>
    <property type="status" value="JOINED"/>
    <property type="molecule type" value="Genomic_DNA"/>
</dbReference>
<dbReference type="EMBL" id="AF026958">
    <property type="protein sequence ID" value="AAC18822.1"/>
    <property type="molecule type" value="Genomic_DNA"/>
</dbReference>
<dbReference type="EMBL" id="AF026956">
    <property type="protein sequence ID" value="AAC18822.1"/>
    <property type="status" value="JOINED"/>
    <property type="molecule type" value="Genomic_DNA"/>
</dbReference>
<dbReference type="EMBL" id="AF026957">
    <property type="protein sequence ID" value="AAC18822.1"/>
    <property type="status" value="JOINED"/>
    <property type="molecule type" value="Genomic_DNA"/>
</dbReference>
<dbReference type="EMBL" id="AF050113">
    <property type="protein sequence ID" value="AAG02284.1"/>
    <property type="molecule type" value="Genomic_DNA"/>
</dbReference>
<dbReference type="EMBL" id="BC008392">
    <property type="protein sequence ID" value="AAH08392.1"/>
    <property type="molecule type" value="mRNA"/>
</dbReference>
<dbReference type="CCDS" id="CCDS44677.1">
    <molecule id="P55916-2"/>
</dbReference>
<dbReference type="CCDS" id="CCDS8229.1">
    <molecule id="P55916-1"/>
</dbReference>
<dbReference type="PIR" id="JC5522">
    <property type="entry name" value="JC5522"/>
</dbReference>
<dbReference type="RefSeq" id="NP_003347.1">
    <molecule id="P55916-1"/>
    <property type="nucleotide sequence ID" value="NM_003356.4"/>
</dbReference>
<dbReference type="RefSeq" id="NP_073714.1">
    <molecule id="P55916-2"/>
    <property type="nucleotide sequence ID" value="NM_022803.3"/>
</dbReference>
<dbReference type="RefSeq" id="XP_047283475.1">
    <molecule id="P55916-1"/>
    <property type="nucleotide sequence ID" value="XM_047427519.1"/>
</dbReference>
<dbReference type="SMR" id="P55916"/>
<dbReference type="BioGRID" id="113199">
    <property type="interactions" value="14"/>
</dbReference>
<dbReference type="FunCoup" id="P55916">
    <property type="interactions" value="212"/>
</dbReference>
<dbReference type="IntAct" id="P55916">
    <property type="interactions" value="1"/>
</dbReference>
<dbReference type="MINT" id="P55916"/>
<dbReference type="STRING" id="9606.ENSP00000323740"/>
<dbReference type="TCDB" id="2.A.29.3.5">
    <property type="family name" value="the mitochondrial carrier (mc) family"/>
</dbReference>
<dbReference type="GlyGen" id="P55916">
    <property type="glycosylation" value="1 site, 1 O-linked glycan (1 site)"/>
</dbReference>
<dbReference type="iPTMnet" id="P55916"/>
<dbReference type="PhosphoSitePlus" id="P55916"/>
<dbReference type="BioMuta" id="UCP3"/>
<dbReference type="PaxDb" id="9606-ENSP00000323740"/>
<dbReference type="PeptideAtlas" id="P55916"/>
<dbReference type="ProteomicsDB" id="56879">
    <molecule id="P55916-1"/>
</dbReference>
<dbReference type="ProteomicsDB" id="56880">
    <molecule id="P55916-2"/>
</dbReference>
<dbReference type="ProteomicsDB" id="56881">
    <molecule id="P55916-3"/>
</dbReference>
<dbReference type="Antibodypedia" id="4388">
    <property type="antibodies" value="283 antibodies from 34 providers"/>
</dbReference>
<dbReference type="DNASU" id="7352"/>
<dbReference type="Ensembl" id="ENST00000314032.9">
    <molecule id="P55916-1"/>
    <property type="protein sequence ID" value="ENSP00000323740.4"/>
    <property type="gene ID" value="ENSG00000175564.13"/>
</dbReference>
<dbReference type="Ensembl" id="ENST00000426995.2">
    <molecule id="P55916-2"/>
    <property type="protein sequence ID" value="ENSP00000392143.2"/>
    <property type="gene ID" value="ENSG00000175564.13"/>
</dbReference>
<dbReference type="GeneID" id="7352"/>
<dbReference type="KEGG" id="hsa:7352"/>
<dbReference type="MANE-Select" id="ENST00000314032.9">
    <property type="protein sequence ID" value="ENSP00000323740.4"/>
    <property type="RefSeq nucleotide sequence ID" value="NM_003356.4"/>
    <property type="RefSeq protein sequence ID" value="NP_003347.1"/>
</dbReference>
<dbReference type="UCSC" id="uc001our.4">
    <molecule id="P55916-1"/>
    <property type="organism name" value="human"/>
</dbReference>
<dbReference type="AGR" id="HGNC:12519"/>
<dbReference type="CTD" id="7352"/>
<dbReference type="DisGeNET" id="7352"/>
<dbReference type="GeneCards" id="UCP3"/>
<dbReference type="HGNC" id="HGNC:12519">
    <property type="gene designation" value="UCP3"/>
</dbReference>
<dbReference type="HPA" id="ENSG00000175564">
    <property type="expression patterns" value="Group enriched (skeletal muscle, tongue)"/>
</dbReference>
<dbReference type="MalaCards" id="UCP3"/>
<dbReference type="MIM" id="601665">
    <property type="type" value="phenotype"/>
</dbReference>
<dbReference type="MIM" id="602044">
    <property type="type" value="gene"/>
</dbReference>
<dbReference type="neXtProt" id="NX_P55916"/>
<dbReference type="OpenTargets" id="ENSG00000175564"/>
<dbReference type="PharmGKB" id="PA37166"/>
<dbReference type="VEuPathDB" id="HostDB:ENSG00000175564"/>
<dbReference type="eggNOG" id="KOG0753">
    <property type="taxonomic scope" value="Eukaryota"/>
</dbReference>
<dbReference type="GeneTree" id="ENSGT00940000161030"/>
<dbReference type="HOGENOM" id="CLU_015166_14_2_1"/>
<dbReference type="InParanoid" id="P55916"/>
<dbReference type="OMA" id="TRIMSAH"/>
<dbReference type="OrthoDB" id="448427at2759"/>
<dbReference type="PAN-GO" id="P55916">
    <property type="GO annotations" value="4 GO annotations based on evolutionary models"/>
</dbReference>
<dbReference type="PhylomeDB" id="P55916"/>
<dbReference type="TreeFam" id="TF323211"/>
<dbReference type="PathwayCommons" id="P55916"/>
<dbReference type="Reactome" id="R-HSA-167826">
    <property type="pathway name" value="The fatty acid cycling model"/>
</dbReference>
<dbReference type="SignaLink" id="P55916"/>
<dbReference type="SIGNOR" id="P55916"/>
<dbReference type="BioGRID-ORCS" id="7352">
    <property type="hits" value="15 hits in 1150 CRISPR screens"/>
</dbReference>
<dbReference type="GeneWiki" id="UCP3"/>
<dbReference type="GenomeRNAi" id="7352"/>
<dbReference type="Pharos" id="P55916">
    <property type="development level" value="Tbio"/>
</dbReference>
<dbReference type="PRO" id="PR:P55916"/>
<dbReference type="Proteomes" id="UP000005640">
    <property type="component" value="Chromosome 11"/>
</dbReference>
<dbReference type="RNAct" id="P55916">
    <property type="molecule type" value="protein"/>
</dbReference>
<dbReference type="Bgee" id="ENSG00000175564">
    <property type="expression patterns" value="Expressed in gastrocnemius and 180 other cell types or tissues"/>
</dbReference>
<dbReference type="ExpressionAtlas" id="P55916">
    <property type="expression patterns" value="baseline and differential"/>
</dbReference>
<dbReference type="GO" id="GO:0005743">
    <property type="term" value="C:mitochondrial inner membrane"/>
    <property type="evidence" value="ECO:0000250"/>
    <property type="project" value="UniProtKB"/>
</dbReference>
<dbReference type="GO" id="GO:0005739">
    <property type="term" value="C:mitochondrion"/>
    <property type="evidence" value="ECO:0006056"/>
    <property type="project" value="FlyBase"/>
</dbReference>
<dbReference type="GO" id="GO:0017077">
    <property type="term" value="F:oxidative phosphorylation uncoupler activity"/>
    <property type="evidence" value="ECO:0000314"/>
    <property type="project" value="UniProtKB"/>
</dbReference>
<dbReference type="GO" id="GO:0015078">
    <property type="term" value="F:proton transmembrane transporter activity"/>
    <property type="evidence" value="ECO:0000314"/>
    <property type="project" value="UniProtKB"/>
</dbReference>
<dbReference type="GO" id="GO:1990845">
    <property type="term" value="P:adaptive thermogenesis"/>
    <property type="evidence" value="ECO:0000318"/>
    <property type="project" value="GO_Central"/>
</dbReference>
<dbReference type="GO" id="GO:0032870">
    <property type="term" value="P:cellular response to hormone stimulus"/>
    <property type="evidence" value="ECO:0007669"/>
    <property type="project" value="Ensembl"/>
</dbReference>
<dbReference type="GO" id="GO:0006631">
    <property type="term" value="P:fatty acid metabolic process"/>
    <property type="evidence" value="ECO:0007669"/>
    <property type="project" value="Ensembl"/>
</dbReference>
<dbReference type="GO" id="GO:1901373">
    <property type="term" value="P:lipid hydroperoxide transport"/>
    <property type="evidence" value="ECO:0007669"/>
    <property type="project" value="Ensembl"/>
</dbReference>
<dbReference type="GO" id="GO:0006629">
    <property type="term" value="P:lipid metabolic process"/>
    <property type="evidence" value="ECO:0000304"/>
    <property type="project" value="ProtInc"/>
</dbReference>
<dbReference type="GO" id="GO:1990542">
    <property type="term" value="P:mitochondrial transmembrane transport"/>
    <property type="evidence" value="ECO:0000318"/>
    <property type="project" value="GO_Central"/>
</dbReference>
<dbReference type="GO" id="GO:1902600">
    <property type="term" value="P:proton transmembrane transport"/>
    <property type="evidence" value="ECO:0000314"/>
    <property type="project" value="UniProtKB"/>
</dbReference>
<dbReference type="GO" id="GO:0007585">
    <property type="term" value="P:respiratory gaseous exchange by respiratory system"/>
    <property type="evidence" value="ECO:0000304"/>
    <property type="project" value="ProtInc"/>
</dbReference>
<dbReference type="GO" id="GO:0014823">
    <property type="term" value="P:response to activity"/>
    <property type="evidence" value="ECO:0007669"/>
    <property type="project" value="Ensembl"/>
</dbReference>
<dbReference type="GO" id="GO:0009409">
    <property type="term" value="P:response to cold"/>
    <property type="evidence" value="ECO:0000318"/>
    <property type="project" value="GO_Central"/>
</dbReference>
<dbReference type="GO" id="GO:1901557">
    <property type="term" value="P:response to fenofibrate"/>
    <property type="evidence" value="ECO:0007669"/>
    <property type="project" value="Ensembl"/>
</dbReference>
<dbReference type="GO" id="GO:0051384">
    <property type="term" value="P:response to glucocorticoid"/>
    <property type="evidence" value="ECO:0007669"/>
    <property type="project" value="Ensembl"/>
</dbReference>
<dbReference type="GO" id="GO:0001666">
    <property type="term" value="P:response to hypoxia"/>
    <property type="evidence" value="ECO:0007669"/>
    <property type="project" value="Ensembl"/>
</dbReference>
<dbReference type="GO" id="GO:0032868">
    <property type="term" value="P:response to insulin"/>
    <property type="evidence" value="ECO:0007669"/>
    <property type="project" value="Ensembl"/>
</dbReference>
<dbReference type="GO" id="GO:0007584">
    <property type="term" value="P:response to nutrient"/>
    <property type="evidence" value="ECO:0007669"/>
    <property type="project" value="Ensembl"/>
</dbReference>
<dbReference type="GO" id="GO:0000303">
    <property type="term" value="P:response to superoxide"/>
    <property type="evidence" value="ECO:0007669"/>
    <property type="project" value="Ensembl"/>
</dbReference>
<dbReference type="FunFam" id="1.50.40.10:FF:000008">
    <property type="entry name" value="Mitochondrial uncoupling protein 2"/>
    <property type="match status" value="1"/>
</dbReference>
<dbReference type="Gene3D" id="1.50.40.10">
    <property type="entry name" value="Mitochondrial carrier domain"/>
    <property type="match status" value="1"/>
</dbReference>
<dbReference type="InterPro" id="IPR002067">
    <property type="entry name" value="Mit_carrier"/>
</dbReference>
<dbReference type="InterPro" id="IPR050391">
    <property type="entry name" value="Mito_Metabolite_Transporter"/>
</dbReference>
<dbReference type="InterPro" id="IPR018108">
    <property type="entry name" value="Mitochondrial_sb/sol_carrier"/>
</dbReference>
<dbReference type="InterPro" id="IPR023395">
    <property type="entry name" value="Mt_carrier_dom_sf"/>
</dbReference>
<dbReference type="PANTHER" id="PTHR45618">
    <property type="entry name" value="MITOCHONDRIAL DICARBOXYLATE CARRIER-RELATED"/>
    <property type="match status" value="1"/>
</dbReference>
<dbReference type="Pfam" id="PF00153">
    <property type="entry name" value="Mito_carr"/>
    <property type="match status" value="3"/>
</dbReference>
<dbReference type="PRINTS" id="PR00784">
    <property type="entry name" value="MTUNCOUPLING"/>
</dbReference>
<dbReference type="SUPFAM" id="SSF103506">
    <property type="entry name" value="Mitochondrial carrier"/>
    <property type="match status" value="1"/>
</dbReference>
<dbReference type="PROSITE" id="PS50920">
    <property type="entry name" value="SOLCAR"/>
    <property type="match status" value="3"/>
</dbReference>
<accession>P55916</accession>
<accession>O60475</accession>
<accession>Q96HL3</accession>
<sequence length="312" mass="34216">MVGLKPSDVPPTMAVKFLGAGTAACFADLVTFPLDTAKVRLQIQGENQAVQTARLVQYRGVLGTILTMVRTEGPCSPYNGLVAGLQRQMSFASIRIGLYDSVKQVYTPKGADNSSLTTRILAGCTTGAMAVTCAQPTDVVKVRFQASIHLGPSRSDRKYSGTMDAYRTIAREEGVRGLWKGTLPNIMRNAIVNCAEVVTYDILKEKLLDYHLLTDNFPCHFVSAFGAGFCATVVASPVDVVKTRYMNSPPGQYFSPLDCMIKMVAQEGPTAFYKGFTPSFLRLGSWNVVMFVTYEQLKRALMKVQMLRESPF</sequence>
<evidence type="ECO:0000250" key="1"/>
<evidence type="ECO:0000250" key="2">
    <source>
        <dbReference type="UniProtKB" id="P56501"/>
    </source>
</evidence>
<evidence type="ECO:0000255" key="3"/>
<evidence type="ECO:0000269" key="4">
    <source>
    </source>
</evidence>
<evidence type="ECO:0000269" key="5">
    <source>
    </source>
</evidence>
<evidence type="ECO:0000269" key="6">
    <source>
    </source>
</evidence>
<evidence type="ECO:0000269" key="7">
    <source>
    </source>
</evidence>
<evidence type="ECO:0000269" key="8">
    <source>
    </source>
</evidence>
<evidence type="ECO:0000269" key="9">
    <source>
    </source>
</evidence>
<evidence type="ECO:0000269" key="10">
    <source>
    </source>
</evidence>
<evidence type="ECO:0000269" key="11">
    <source>
    </source>
</evidence>
<evidence type="ECO:0000269" key="12">
    <source>
    </source>
</evidence>
<evidence type="ECO:0000269" key="13">
    <source>
    </source>
</evidence>
<evidence type="ECO:0000269" key="14">
    <source ref="16"/>
</evidence>
<evidence type="ECO:0000303" key="15">
    <source>
    </source>
</evidence>
<evidence type="ECO:0000303" key="16">
    <source>
    </source>
</evidence>
<evidence type="ECO:0000303" key="17">
    <source>
    </source>
</evidence>
<evidence type="ECO:0000305" key="18"/>
<evidence type="ECO:0000312" key="19">
    <source>
        <dbReference type="HGNC" id="HGNC:12519"/>
    </source>
</evidence>
<keyword id="KW-0025">Alternative splicing</keyword>
<keyword id="KW-0219">Diabetes mellitus</keyword>
<keyword id="KW-0225">Disease variant</keyword>
<keyword id="KW-0472">Membrane</keyword>
<keyword id="KW-0496">Mitochondrion</keyword>
<keyword id="KW-0999">Mitochondrion inner membrane</keyword>
<keyword id="KW-0550">Obesity</keyword>
<keyword id="KW-1267">Proteomics identification</keyword>
<keyword id="KW-1185">Reference proteome</keyword>
<keyword id="KW-0677">Repeat</keyword>
<keyword id="KW-0812">Transmembrane</keyword>
<keyword id="KW-1133">Transmembrane helix</keyword>
<keyword id="KW-0813">Transport</keyword>
<organism>
    <name type="scientific">Homo sapiens</name>
    <name type="common">Human</name>
    <dbReference type="NCBI Taxonomy" id="9606"/>
    <lineage>
        <taxon>Eukaryota</taxon>
        <taxon>Metazoa</taxon>
        <taxon>Chordata</taxon>
        <taxon>Craniata</taxon>
        <taxon>Vertebrata</taxon>
        <taxon>Euteleostomi</taxon>
        <taxon>Mammalia</taxon>
        <taxon>Eutheria</taxon>
        <taxon>Euarchontoglires</taxon>
        <taxon>Primates</taxon>
        <taxon>Haplorrhini</taxon>
        <taxon>Catarrhini</taxon>
        <taxon>Hominidae</taxon>
        <taxon>Homo</taxon>
    </lineage>
</organism>
<gene>
    <name evidence="16 19" type="primary">UCP3</name>
    <name evidence="19" type="synonym">SLC25A9</name>
</gene>
<comment type="function">
    <text evidence="4 5 6 7 8 10 12">Putative transmembrane transporter that plays a role in mitochondrial metabolism via an as yet unclear mechanism (PubMed:21775425, PubMed:36114012). Originally, this mitochondrial protein was thought to act as a proton transmembrane transporter from the mitochondrial intermembrane space into the matrix, causing proton leaks through the inner mitochondrial membrane, thereby uncoupling mitochondrial membrane potential generation from ATP synthesis (PubMed:11171965, PubMed:12670931, PubMed:12734183, PubMed:9305858). However, this function is controversial and uncoupling may not be the function, or at least not the main function, but rather a consequence of more conventional metabolite transporter activity (PubMed:11707458).</text>
</comment>
<comment type="activity regulation">
    <text evidence="4 7">The proton transporter activity is activated by fatty acids (in vitro) (PubMed:11171965). The proton transporter activity is inhibited by ATP and ADP (in vitro) (PubMed:11171965). The effect of Ubiquinone/coenzyme Q10 on the proton transporter activity in reconstituted membranes is unclear (in vitro) (PubMed:11171965, PubMed:12734183).</text>
</comment>
<comment type="subunit">
    <text evidence="9">Interacts with HAX1; the interaction is direct and calcium-dependent.</text>
</comment>
<comment type="interaction">
    <interactant intactId="EBI-9116865">
        <id>P55916</id>
    </interactant>
    <interactant intactId="EBI-2548993">
        <id>P03495</id>
        <label>NS</label>
    </interactant>
    <organismsDiffer>true</organismsDiffer>
    <experiments>2</experiments>
</comment>
<comment type="subcellular location">
    <subcellularLocation>
        <location evidence="2">Mitochondrion inner membrane</location>
        <topology evidence="3">Multi-pass membrane protein</topology>
    </subcellularLocation>
</comment>
<comment type="alternative products">
    <event type="alternative splicing"/>
    <isoform>
        <id>P55916-1</id>
        <name evidence="17">UCP3L</name>
        <sequence type="displayed"/>
    </isoform>
    <isoform>
        <id>P55916-2</id>
        <name evidence="17">UCP3S</name>
        <sequence type="described" ref="VSP_003271"/>
    </isoform>
    <isoform>
        <id>P55916-3</id>
        <name>3</name>
        <sequence type="described" ref="VSP_003270"/>
    </isoform>
</comment>
<comment type="tissue specificity">
    <text evidence="11 12">Only in skeletal muscle and heart (PubMed:9305858). Also expressed in white and brown adipose tissues (PubMed:9305858). Is more expressed in glycolytic than in oxidative skeletal muscles.</text>
</comment>
<comment type="induction">
    <text evidence="12">Up-regulated by beta3-adrenergic stimulation, starvation, glucocorticoids and leptin.</text>
</comment>
<comment type="disease" evidence="13 14">
    <disease id="DI-01221">
        <name>Obesity</name>
        <acronym>OBESITY</acronym>
        <description>A condition characterized by an increase of body weight beyond the limitation of skeletal and physical requirements, as the result of excessive accumulation of body fat.</description>
        <dbReference type="MIM" id="601665"/>
    </disease>
    <text>The gene represented in this entry may be involved in disease pathogenesis.</text>
</comment>
<comment type="similarity">
    <text evidence="18">Belongs to the mitochondrial carrier (TC 2.A.29) family.</text>
</comment>
<comment type="sequence caution" evidence="18">
    <conflict type="erroneous initiation">
        <sequence resource="EMBL-CDS" id="AAC51785"/>
    </conflict>
</comment>
<reference key="1">
    <citation type="journal article" date="1997" name="FEBS Lett.">
        <title>Uncoupling protein-3: a new member of the mitochondrial carrier family with tissue-specific expression.</title>
        <authorList>
            <person name="Boss O."/>
            <person name="Samec S."/>
            <person name="Paoloni-Giacobino A."/>
            <person name="Dulloo A."/>
            <person name="Seydoux J."/>
            <person name="Rossier C."/>
            <person name="Muzzin P."/>
            <person name="Giacobino J.-P."/>
        </authorList>
    </citation>
    <scope>NUCLEOTIDE SEQUENCE [MRNA]</scope>
    <source>
        <tissue>Skeletal muscle</tissue>
    </source>
</reference>
<reference key="2">
    <citation type="journal article" date="1997" name="J. Biol. Chem.">
        <title>The human uncoupling protein-3 gene. Genomic structure, chromosomal localization, and genetic basis for short and long form transcripts.</title>
        <authorList>
            <person name="Solanes G."/>
            <person name="Vidal-Puig A."/>
            <person name="Grujic D."/>
            <person name="Flier J.S."/>
            <person name="Lowell B.B."/>
        </authorList>
    </citation>
    <scope>NUCLEOTIDE SEQUENCE [GENOMIC DNA] (ISOFORMS UCP3L AND UCP3S)</scope>
</reference>
<reference key="3">
    <citation type="journal article" date="1997" name="Biochem. Biophys. Res. Commun.">
        <title>UCP3: an uncoupling protein homologue expressed preferentially and abundantly in skeletal muscle and brown adipose tissue.</title>
        <authorList>
            <person name="Vidal-Puig A."/>
            <person name="Solanes G."/>
            <person name="Grujic D."/>
            <person name="Flier J.S."/>
            <person name="Lowell B.B."/>
        </authorList>
    </citation>
    <scope>NUCLEOTIDE SEQUENCE [MRNA] (ISOFORM UCP3L)</scope>
    <scope>TISSUE SPECIFICITY</scope>
</reference>
<reference key="4">
    <citation type="journal article" date="1997" name="J. Biol. Chem.">
        <title>Uncoupling protein-3 is a mediator of thermogenesis regulated by thyroid hormone, beta3-adrenergic agonists, and leptin.</title>
        <authorList>
            <person name="Gong D.-W."/>
            <person name="He Y."/>
            <person name="Karas M."/>
            <person name="Reitman M."/>
        </authorList>
    </citation>
    <scope>NUCLEOTIDE SEQUENCE [MRNA]</scope>
    <scope>FUNCTION</scope>
    <scope>TISSUE SPECIFICITY</scope>
    <scope>INDUCTION</scope>
</reference>
<reference key="5">
    <citation type="journal article" date="1998" name="Diabetologia">
        <title>Organisation of the coding exons and mutational screening of the uncoupling protein 3 gene in subjects with juvenile-onset obesity.</title>
        <authorList>
            <person name="Urhammer S.A."/>
            <person name="Dalgaard L.T."/>
            <person name="Soerensen T.I.A."/>
            <person name="Tybjaerg-Hansen A."/>
            <person name="Echwald S.M."/>
            <person name="Andersen T."/>
            <person name="Clausen J.O."/>
            <person name="Pedersen O."/>
        </authorList>
    </citation>
    <scope>NUCLEOTIDE SEQUENCE [GENOMIC DNA]</scope>
</reference>
<reference key="6">
    <citation type="journal article" date="2000" name="J. Biol. Chem.">
        <title>The uncoupling protein-3 gene is transcribed from tissue-specific promoters in humans but not in rodents.</title>
        <authorList>
            <person name="Esterbauer H."/>
            <person name="Oberkofler H."/>
            <person name="Krempler F."/>
            <person name="Strosberg A.D."/>
            <person name="Patsch W."/>
        </authorList>
    </citation>
    <scope>NUCLEOTIDE SEQUENCE [GENOMIC DNA]</scope>
</reference>
<reference key="7">
    <citation type="journal article" date="2004" name="Genome Res.">
        <title>The status, quality, and expansion of the NIH full-length cDNA project: the Mammalian Gene Collection (MGC).</title>
        <authorList>
            <consortium name="The MGC Project Team"/>
        </authorList>
    </citation>
    <scope>NUCLEOTIDE SEQUENCE [LARGE SCALE MRNA] (ISOFORM 3)</scope>
    <source>
        <tissue>Skeletal muscle</tissue>
    </source>
</reference>
<reference key="8">
    <citation type="journal article" date="2001" name="Proc. Natl. Acad. Sci. U.S.A.">
        <title>Uncoupling proteins 2 and 3 are highly active H(+) transporters and highly nucleotide sensitive when activated by coenzyme Q (ubiquinone).</title>
        <authorList>
            <person name="Echtay K.S."/>
            <person name="Winkler E."/>
            <person name="Frischmuth K."/>
            <person name="Klingenberg M."/>
        </authorList>
    </citation>
    <scope>FUNCTION</scope>
    <scope>ACTIVITY REGULATION</scope>
</reference>
<reference key="9">
    <citation type="journal article" date="2002" name="J. Biol. Chem.">
        <title>The basal proton conductance of skeletal muscle mitochondria from transgenic mice overexpressing or lacking uncoupling protein-3.</title>
        <authorList>
            <person name="Cadenas S."/>
            <person name="Echtay K.S."/>
            <person name="Harper J.A."/>
            <person name="Jekabsons M.B."/>
            <person name="Buckingham J.A."/>
            <person name="Grau E."/>
            <person name="Abuin A."/>
            <person name="Chapman H."/>
            <person name="Clapham J.C."/>
            <person name="Brand M.D."/>
        </authorList>
    </citation>
    <scope>FUNCTION</scope>
</reference>
<reference key="10">
    <citation type="journal article" date="2003" name="J. Biol. Chem.">
        <title>Activating omega-6 polyunsaturated fatty acids and inhibitory purine nucleotides are high affinity ligands for novel mitochondrial uncoupling proteins UCP2 and UCP3.</title>
        <authorList>
            <person name="Zackova M."/>
            <person name="Skobisova E."/>
            <person name="Urbankova E."/>
            <person name="Jezek P."/>
        </authorList>
    </citation>
    <scope>FUNCTION</scope>
</reference>
<reference key="11">
    <citation type="journal article" date="2003" name="J. Biol. Chem.">
        <title>Reconstitution of recombinant uncoupling proteins: UCP1, -2, and -3 have similar affinities for ATP and are unaffected by coenzyme Q10.</title>
        <authorList>
            <person name="Jaburek M."/>
            <person name="Garlid K.D."/>
        </authorList>
    </citation>
    <scope>FUNCTION</scope>
    <scope>ACTIVITY REGULATION</scope>
</reference>
<reference key="12">
    <citation type="journal article" date="2011" name="J. Biol. Chem.">
        <title>Uncoupling protein 3 (UCP3) modulates the activity of Sarco/endoplasmic reticulum Ca2+-ATPase (SERCA) by decreasing mitochondrial ATP production.</title>
        <authorList>
            <person name="De Marchi U."/>
            <person name="Castelbou C."/>
            <person name="Demaurex N."/>
        </authorList>
    </citation>
    <scope>FUNCTION</scope>
</reference>
<reference key="13">
    <citation type="journal article" date="2016" name="Biochem. Biophys. Res. Commun.">
        <title>UCP3 is associated with Hax-1 in mitochondria in the presence of calcium ion.</title>
        <authorList>
            <person name="Hirasaka K."/>
            <person name="Mills E.M."/>
            <person name="Haruna M."/>
            <person name="Bando A."/>
            <person name="Ikeda C."/>
            <person name="Abe T."/>
            <person name="Kohno S."/>
            <person name="Nowinski S.M."/>
            <person name="Lago C.U."/>
            <person name="Akagi K."/>
            <person name="Tochio H."/>
            <person name="Ohno A."/>
            <person name="Teshima-Kondo S."/>
            <person name="Okumura Y."/>
            <person name="Nikawa T."/>
        </authorList>
    </citation>
    <scope>INTERACTION WITH HAX1</scope>
</reference>
<reference key="14">
    <citation type="journal article" date="2022" name="FEBS Lett.">
        <title>Overexpression of UCP3 decreases mitochondrial efficiency in mouse skeletal muscle in vivo.</title>
        <authorList>
            <person name="Codella R."/>
            <person name="Alves T.C."/>
            <person name="Befroy D.E."/>
            <person name="Choi C.S."/>
            <person name="Luzi L."/>
            <person name="Rothman D.L."/>
            <person name="Kibbey R.G."/>
            <person name="Shulman G.I."/>
        </authorList>
    </citation>
    <scope>FUNCTION</scope>
</reference>
<reference key="15">
    <citation type="journal article" date="1998" name="J. Clin. Invest.">
        <title>Effects of mutations in the human uncoupling protein 3 gene on the respiratory quotient and fat oxidation in severe obesity and type 2 diabetes.</title>
        <authorList>
            <person name="Argyropoulos G."/>
            <person name="Brown A.M."/>
            <person name="Willi S.M."/>
            <person name="Zhu J."/>
            <person name="He Y."/>
            <person name="Reitman M."/>
            <person name="Gevao S.M."/>
            <person name="Spruill I."/>
            <person name="Garvey W.T."/>
        </authorList>
    </citation>
    <scope>VARIANT OBESITY ILE-102</scope>
</reference>
<reference key="16">
    <citation type="journal article" date="1999" name="Hum. Mutat.">
        <title>A novel missense mutation, R70W, in the human uncoupling protein 3 gene in a family with type 2 diabetes.</title>
        <authorList>
            <person name="Brown A.M."/>
            <person name="Willi S.M."/>
            <person name="Argyropoulos G."/>
            <person name="Garvey W.T."/>
        </authorList>
    </citation>
    <scope>VARIANT OBESITY TRP-70</scope>
</reference>